<proteinExistence type="inferred from homology"/>
<evidence type="ECO:0000250" key="1">
    <source>
        <dbReference type="UniProtKB" id="P33371"/>
    </source>
</evidence>
<evidence type="ECO:0000250" key="2">
    <source>
        <dbReference type="UniProtKB" id="Q5SMC7"/>
    </source>
</evidence>
<evidence type="ECO:0000305" key="3"/>
<organism>
    <name type="scientific">Helicobacter pylori (strain ATCC 700392 / 26695)</name>
    <name type="common">Campylobacter pylori</name>
    <dbReference type="NCBI Taxonomy" id="85962"/>
    <lineage>
        <taxon>Bacteria</taxon>
        <taxon>Pseudomonadati</taxon>
        <taxon>Campylobacterota</taxon>
        <taxon>Epsilonproteobacteria</taxon>
        <taxon>Campylobacterales</taxon>
        <taxon>Helicobacteraceae</taxon>
        <taxon>Helicobacter</taxon>
    </lineage>
</organism>
<accession>O25427</accession>
<sequence length="328" mass="37150">MDFKNKKWLFLAPLAGYTDLPFRSVVKKFGVDVTTSEMVSSHSLVYAFDKTSKMLEKSPLEDHFMAQISGSKESVVKEAVEKINALEHVNGIDFNCGCPAPKVANHGNGSGLLKDLNHLVKLLKTIRENTSKKITSVKVRLGFEKKIPKEIAHALNDAPVDYVVVHGRTRSDKYQKDKIDYESIALMKKILKKPVIANGEIDSVKKAFEVLQITQADGLMIGRAALRAPWIFWQIRNNTTKLPAVVKKDLVLEHFDKMVEFYGDMGVIMFRKNLHAYAKGEMQASAFRNCVNTLTEIKSMRESIEEFFNQEMLQSEVPLWVELNQKSV</sequence>
<dbReference type="EC" id="1.3.1.-"/>
<dbReference type="EMBL" id="AE000511">
    <property type="protein sequence ID" value="AAD07774.1"/>
    <property type="molecule type" value="Genomic_DNA"/>
</dbReference>
<dbReference type="PIR" id="G64610">
    <property type="entry name" value="G64610"/>
</dbReference>
<dbReference type="RefSeq" id="NP_207521.1">
    <property type="nucleotide sequence ID" value="NC_000915.1"/>
</dbReference>
<dbReference type="RefSeq" id="WP_000346174.1">
    <property type="nucleotide sequence ID" value="NC_018939.1"/>
</dbReference>
<dbReference type="SMR" id="O25427"/>
<dbReference type="DIP" id="DIP-3615N"/>
<dbReference type="FunCoup" id="O25427">
    <property type="interactions" value="338"/>
</dbReference>
<dbReference type="IntAct" id="O25427">
    <property type="interactions" value="1"/>
</dbReference>
<dbReference type="MINT" id="O25427"/>
<dbReference type="STRING" id="85962.HP_0727"/>
<dbReference type="PaxDb" id="85962-C694_03740"/>
<dbReference type="EnsemblBacteria" id="AAD07774">
    <property type="protein sequence ID" value="AAD07774"/>
    <property type="gene ID" value="HP_0727"/>
</dbReference>
<dbReference type="KEGG" id="heo:C694_03740"/>
<dbReference type="KEGG" id="hpy:HP_0727"/>
<dbReference type="PATRIC" id="fig|85962.47.peg.776"/>
<dbReference type="eggNOG" id="COG0042">
    <property type="taxonomic scope" value="Bacteria"/>
</dbReference>
<dbReference type="InParanoid" id="O25427"/>
<dbReference type="OrthoDB" id="9764501at2"/>
<dbReference type="PhylomeDB" id="O25427"/>
<dbReference type="Proteomes" id="UP000000429">
    <property type="component" value="Chromosome"/>
</dbReference>
<dbReference type="GO" id="GO:0050660">
    <property type="term" value="F:flavin adenine dinucleotide binding"/>
    <property type="evidence" value="ECO:0007669"/>
    <property type="project" value="InterPro"/>
</dbReference>
<dbReference type="GO" id="GO:0000049">
    <property type="term" value="F:tRNA binding"/>
    <property type="evidence" value="ECO:0007669"/>
    <property type="project" value="UniProtKB-KW"/>
</dbReference>
<dbReference type="GO" id="GO:0017150">
    <property type="term" value="F:tRNA dihydrouridine synthase activity"/>
    <property type="evidence" value="ECO:0000318"/>
    <property type="project" value="GO_Central"/>
</dbReference>
<dbReference type="CDD" id="cd02801">
    <property type="entry name" value="DUS_like_FMN"/>
    <property type="match status" value="1"/>
</dbReference>
<dbReference type="FunFam" id="3.20.20.70:FF:000395">
    <property type="entry name" value="Probable tRNA-dihydrouridine synthase"/>
    <property type="match status" value="1"/>
</dbReference>
<dbReference type="Gene3D" id="3.20.20.70">
    <property type="entry name" value="Aldolase class I"/>
    <property type="match status" value="1"/>
</dbReference>
<dbReference type="Gene3D" id="1.10.1200.80">
    <property type="entry name" value="Putative flavin oxidoreducatase, domain 2"/>
    <property type="match status" value="1"/>
</dbReference>
<dbReference type="InterPro" id="IPR013785">
    <property type="entry name" value="Aldolase_TIM"/>
</dbReference>
<dbReference type="InterPro" id="IPR035587">
    <property type="entry name" value="DUS-like_FMN-bd"/>
</dbReference>
<dbReference type="InterPro" id="IPR001269">
    <property type="entry name" value="DUS_fam"/>
</dbReference>
<dbReference type="InterPro" id="IPR024036">
    <property type="entry name" value="tRNA-dHydroUridine_Synthase_C"/>
</dbReference>
<dbReference type="InterPro" id="IPR018517">
    <property type="entry name" value="tRNA_hU_synthase_CS"/>
</dbReference>
<dbReference type="PANTHER" id="PTHR45846">
    <property type="entry name" value="TRNA-DIHYDROURIDINE(47) SYNTHASE [NAD(P)(+)]-LIKE"/>
    <property type="match status" value="1"/>
</dbReference>
<dbReference type="PANTHER" id="PTHR45846:SF1">
    <property type="entry name" value="TRNA-DIHYDROURIDINE(47) SYNTHASE [NAD(P)(+)]-LIKE"/>
    <property type="match status" value="1"/>
</dbReference>
<dbReference type="Pfam" id="PF01207">
    <property type="entry name" value="Dus"/>
    <property type="match status" value="1"/>
</dbReference>
<dbReference type="PIRSF" id="PIRSF006621">
    <property type="entry name" value="Dus"/>
    <property type="match status" value="1"/>
</dbReference>
<dbReference type="SUPFAM" id="SSF51395">
    <property type="entry name" value="FMN-linked oxidoreductases"/>
    <property type="match status" value="1"/>
</dbReference>
<dbReference type="PROSITE" id="PS01136">
    <property type="entry name" value="UPF0034"/>
    <property type="match status" value="1"/>
</dbReference>
<keyword id="KW-0285">Flavoprotein</keyword>
<keyword id="KW-0288">FMN</keyword>
<keyword id="KW-0521">NADP</keyword>
<keyword id="KW-0560">Oxidoreductase</keyword>
<keyword id="KW-1185">Reference proteome</keyword>
<keyword id="KW-0694">RNA-binding</keyword>
<keyword id="KW-0819">tRNA processing</keyword>
<keyword id="KW-0820">tRNA-binding</keyword>
<protein>
    <recommendedName>
        <fullName>Probable tRNA-dihydrouridine synthase</fullName>
        <ecNumber>1.3.1.-</ecNumber>
    </recommendedName>
</protein>
<name>DUS_HELPY</name>
<gene>
    <name type="primary">dus</name>
    <name type="ordered locus">HP_0727</name>
</gene>
<reference key="1">
    <citation type="journal article" date="1997" name="Nature">
        <title>The complete genome sequence of the gastric pathogen Helicobacter pylori.</title>
        <authorList>
            <person name="Tomb J.-F."/>
            <person name="White O."/>
            <person name="Kerlavage A.R."/>
            <person name="Clayton R.A."/>
            <person name="Sutton G.G."/>
            <person name="Fleischmann R.D."/>
            <person name="Ketchum K.A."/>
            <person name="Klenk H.-P."/>
            <person name="Gill S.R."/>
            <person name="Dougherty B.A."/>
            <person name="Nelson K.E."/>
            <person name="Quackenbush J."/>
            <person name="Zhou L."/>
            <person name="Kirkness E.F."/>
            <person name="Peterson S.N."/>
            <person name="Loftus B.J."/>
            <person name="Richardson D.L."/>
            <person name="Dodson R.J."/>
            <person name="Khalak H.G."/>
            <person name="Glodek A."/>
            <person name="McKenney K."/>
            <person name="FitzGerald L.M."/>
            <person name="Lee N."/>
            <person name="Adams M.D."/>
            <person name="Hickey E.K."/>
            <person name="Berg D.E."/>
            <person name="Gocayne J.D."/>
            <person name="Utterback T.R."/>
            <person name="Peterson J.D."/>
            <person name="Kelley J.M."/>
            <person name="Cotton M.D."/>
            <person name="Weidman J.F."/>
            <person name="Fujii C."/>
            <person name="Bowman C."/>
            <person name="Watthey L."/>
            <person name="Wallin E."/>
            <person name="Hayes W.S."/>
            <person name="Borodovsky M."/>
            <person name="Karp P.D."/>
            <person name="Smith H.O."/>
            <person name="Fraser C.M."/>
            <person name="Venter J.C."/>
        </authorList>
    </citation>
    <scope>NUCLEOTIDE SEQUENCE [LARGE SCALE GENOMIC DNA]</scope>
    <source>
        <strain>ATCC 700392 / 26695</strain>
    </source>
</reference>
<comment type="function">
    <text evidence="1">Catalyzes the synthesis of 5,6-dihydrouridine (D), a modified base found in the D-loop of most tRNAs, via the reduction of the C5-C6 double bond in target uridines.</text>
</comment>
<comment type="catalytic activity">
    <reaction evidence="1">
        <text>a 5,6-dihydrouridine in tRNA + NAD(+) = a uridine in tRNA + NADH + H(+)</text>
        <dbReference type="Rhea" id="RHEA:54452"/>
        <dbReference type="Rhea" id="RHEA-COMP:13339"/>
        <dbReference type="Rhea" id="RHEA-COMP:13887"/>
        <dbReference type="ChEBI" id="CHEBI:15378"/>
        <dbReference type="ChEBI" id="CHEBI:57540"/>
        <dbReference type="ChEBI" id="CHEBI:57945"/>
        <dbReference type="ChEBI" id="CHEBI:65315"/>
        <dbReference type="ChEBI" id="CHEBI:74443"/>
    </reaction>
</comment>
<comment type="catalytic activity">
    <reaction evidence="1">
        <text>a 5,6-dihydrouridine in tRNA + NADP(+) = a uridine in tRNA + NADPH + H(+)</text>
        <dbReference type="Rhea" id="RHEA:23624"/>
        <dbReference type="Rhea" id="RHEA-COMP:13339"/>
        <dbReference type="Rhea" id="RHEA-COMP:13887"/>
        <dbReference type="ChEBI" id="CHEBI:15378"/>
        <dbReference type="ChEBI" id="CHEBI:57783"/>
        <dbReference type="ChEBI" id="CHEBI:58349"/>
        <dbReference type="ChEBI" id="CHEBI:65315"/>
        <dbReference type="ChEBI" id="CHEBI:74443"/>
    </reaction>
</comment>
<comment type="cofactor">
    <cofactor evidence="1">
        <name>FMN</name>
        <dbReference type="ChEBI" id="CHEBI:58210"/>
    </cofactor>
</comment>
<comment type="similarity">
    <text evidence="3">Belongs to the Dus family.</text>
</comment>
<feature type="chain" id="PRO_0000162134" description="Probable tRNA-dihydrouridine synthase">
    <location>
        <begin position="1"/>
        <end position="328"/>
    </location>
</feature>
<feature type="active site" description="Proton donor" evidence="2">
    <location>
        <position position="98"/>
    </location>
</feature>
<feature type="binding site" evidence="1">
    <location>
        <begin position="13"/>
        <end position="15"/>
    </location>
    <ligand>
        <name>FMN</name>
        <dbReference type="ChEBI" id="CHEBI:58210"/>
    </ligand>
</feature>
<feature type="binding site" evidence="1">
    <location>
        <position position="67"/>
    </location>
    <ligand>
        <name>FMN</name>
        <dbReference type="ChEBI" id="CHEBI:58210"/>
    </ligand>
</feature>
<feature type="binding site" evidence="1">
    <location>
        <position position="138"/>
    </location>
    <ligand>
        <name>FMN</name>
        <dbReference type="ChEBI" id="CHEBI:58210"/>
    </ligand>
</feature>
<feature type="binding site" evidence="1">
    <location>
        <begin position="198"/>
        <end position="200"/>
    </location>
    <ligand>
        <name>FMN</name>
        <dbReference type="ChEBI" id="CHEBI:58210"/>
    </ligand>
</feature>
<feature type="binding site" evidence="1">
    <location>
        <begin position="222"/>
        <end position="223"/>
    </location>
    <ligand>
        <name>FMN</name>
        <dbReference type="ChEBI" id="CHEBI:58210"/>
    </ligand>
</feature>